<dbReference type="EMBL" id="AF074613">
    <property type="status" value="NOT_ANNOTATED_CDS"/>
    <property type="molecule type" value="Genomic_DNA"/>
</dbReference>
<dbReference type="EMBL" id="AB011549">
    <property type="protein sequence ID" value="BAA31794.1"/>
    <property type="molecule type" value="Genomic_DNA"/>
</dbReference>
<dbReference type="PIR" id="T00275">
    <property type="entry name" value="T00275"/>
</dbReference>
<dbReference type="RefSeq" id="NP_052644.1">
    <property type="nucleotide sequence ID" value="NC_002128.1"/>
</dbReference>
<dbReference type="RefSeq" id="WP_010891292.1">
    <property type="nucleotide sequence ID" value="NZ_VOAI01000050.1"/>
</dbReference>
<dbReference type="KEGG" id="ecs:pO157p37"/>
<dbReference type="HOGENOM" id="CLU_2540636_0_0_6"/>
<dbReference type="Proteomes" id="UP000000558">
    <property type="component" value="Plasmid pO157"/>
</dbReference>
<dbReference type="Proteomes" id="UP000002519">
    <property type="component" value="Plasmid pO157"/>
</dbReference>
<accession>O82896</accession>
<gene>
    <name type="primary">yubC</name>
    <name type="ordered locus">L7073.1</name>
    <name type="ordered locus">ECO57PM37</name>
</gene>
<protein>
    <recommendedName>
        <fullName>Uncharacterized protein YubC</fullName>
    </recommendedName>
</protein>
<geneLocation type="plasmid">
    <name>pO157</name>
</geneLocation>
<sequence length="101" mass="11399">MTETGGQPPVSFPVKDVAGLLFLLRRLTRRGRNAACGQCPASGRARDGRFYRSRLASVTVYASPSPFSDERPSSRFRGIFSPSKRRRLRYSTVGLTRYRTR</sequence>
<keyword id="KW-0614">Plasmid</keyword>
<keyword id="KW-1185">Reference proteome</keyword>
<organism>
    <name type="scientific">Escherichia coli O157:H7</name>
    <dbReference type="NCBI Taxonomy" id="83334"/>
    <lineage>
        <taxon>Bacteria</taxon>
        <taxon>Pseudomonadati</taxon>
        <taxon>Pseudomonadota</taxon>
        <taxon>Gammaproteobacteria</taxon>
        <taxon>Enterobacterales</taxon>
        <taxon>Enterobacteriaceae</taxon>
        <taxon>Escherichia</taxon>
    </lineage>
</organism>
<feature type="chain" id="PRO_0000263040" description="Uncharacterized protein YubC">
    <location>
        <begin position="1"/>
        <end position="101"/>
    </location>
</feature>
<name>YUBC_ECO57</name>
<reference key="1">
    <citation type="journal article" date="1998" name="Nucleic Acids Res.">
        <title>The complete DNA sequence and analysis of the large virulence plasmid of Escherichia coli O157:H7.</title>
        <authorList>
            <person name="Burland V."/>
            <person name="Shao Y."/>
            <person name="Perna N.T."/>
            <person name="Plunkett G. III"/>
            <person name="Sofia H.J."/>
            <person name="Blattner F.R."/>
        </authorList>
    </citation>
    <scope>NUCLEOTIDE SEQUENCE [LARGE SCALE GENOMIC DNA]</scope>
    <source>
        <strain>O157:H7 / EDL933 / ATCC 700927 / EHEC</strain>
    </source>
</reference>
<reference key="2">
    <citation type="journal article" date="1998" name="DNA Res.">
        <title>Complete nucleotide sequences of 93-kb and 3.3-kb plasmids of an enterohemorrhagic Escherichia coli O157:H7 derived from Sakai outbreak.</title>
        <authorList>
            <person name="Makino K."/>
            <person name="Ishii K."/>
            <person name="Yasunaga T."/>
            <person name="Hattori M."/>
            <person name="Yokoyama K."/>
            <person name="Yatsudo H.C."/>
            <person name="Kubota Y."/>
            <person name="Yamaichi Y."/>
            <person name="Iida T."/>
            <person name="Yamamoto K."/>
            <person name="Honda T."/>
            <person name="Han C.G."/>
            <person name="Ohtsubo A."/>
            <person name="Kasamatsu M."/>
            <person name="Hayashi T."/>
            <person name="Kuhara S."/>
            <person name="Shinagawa H."/>
        </authorList>
    </citation>
    <scope>NUCLEOTIDE SEQUENCE [LARGE SCALE GENOMIC DNA]</scope>
    <source>
        <strain>O157:H7 / Sakai / RIMD 0509952 / EHEC</strain>
    </source>
</reference>
<proteinExistence type="predicted"/>